<comment type="function">
    <text evidence="1">Is probably a protein kinase regulator of UbiI activity which is involved in aerobic coenzyme Q (ubiquinone) biosynthesis.</text>
</comment>
<comment type="pathway">
    <text>Cofactor biosynthesis; ubiquinone biosynthesis [regulation].</text>
</comment>
<comment type="subcellular location">
    <subcellularLocation>
        <location evidence="1">Cell inner membrane</location>
        <topology evidence="1">Multi-pass membrane protein</topology>
    </subcellularLocation>
</comment>
<comment type="similarity">
    <text evidence="1">Belongs to the ABC1 family. UbiB subfamily.</text>
</comment>
<organism>
    <name type="scientific">Xanthomonas euvesicatoria pv. vesicatoria (strain 85-10)</name>
    <name type="common">Xanthomonas campestris pv. vesicatoria</name>
    <dbReference type="NCBI Taxonomy" id="316273"/>
    <lineage>
        <taxon>Bacteria</taxon>
        <taxon>Pseudomonadati</taxon>
        <taxon>Pseudomonadota</taxon>
        <taxon>Gammaproteobacteria</taxon>
        <taxon>Lysobacterales</taxon>
        <taxon>Lysobacteraceae</taxon>
        <taxon>Xanthomonas</taxon>
    </lineage>
</organism>
<protein>
    <recommendedName>
        <fullName evidence="1">Probable protein kinase UbiB</fullName>
        <ecNumber evidence="1">2.7.-.-</ecNumber>
    </recommendedName>
    <alternativeName>
        <fullName evidence="1">Ubiquinone biosynthesis protein UbiB</fullName>
    </alternativeName>
</protein>
<accession>Q3BZ34</accession>
<gene>
    <name evidence="1" type="primary">ubiB</name>
    <name type="ordered locus">XCV0248</name>
</gene>
<reference key="1">
    <citation type="journal article" date="2005" name="J. Bacteriol.">
        <title>Insights into genome plasticity and pathogenicity of the plant pathogenic Bacterium Xanthomonas campestris pv. vesicatoria revealed by the complete genome sequence.</title>
        <authorList>
            <person name="Thieme F."/>
            <person name="Koebnik R."/>
            <person name="Bekel T."/>
            <person name="Berger C."/>
            <person name="Boch J."/>
            <person name="Buettner D."/>
            <person name="Caldana C."/>
            <person name="Gaigalat L."/>
            <person name="Goesmann A."/>
            <person name="Kay S."/>
            <person name="Kirchner O."/>
            <person name="Lanz C."/>
            <person name="Linke B."/>
            <person name="McHardy A.C."/>
            <person name="Meyer F."/>
            <person name="Mittenhuber G."/>
            <person name="Nies D.H."/>
            <person name="Niesbach-Kloesgen U."/>
            <person name="Patschkowski T."/>
            <person name="Rueckert C."/>
            <person name="Rupp O."/>
            <person name="Schneiker S."/>
            <person name="Schuster S.C."/>
            <person name="Vorhoelter F.J."/>
            <person name="Weber E."/>
            <person name="Puehler A."/>
            <person name="Bonas U."/>
            <person name="Bartels D."/>
            <person name="Kaiser O."/>
        </authorList>
    </citation>
    <scope>NUCLEOTIDE SEQUENCE [LARGE SCALE GENOMIC DNA]</scope>
    <source>
        <strain>85-10</strain>
    </source>
</reference>
<dbReference type="EC" id="2.7.-.-" evidence="1"/>
<dbReference type="EMBL" id="AM039952">
    <property type="protein sequence ID" value="CAJ21879.1"/>
    <property type="molecule type" value="Genomic_DNA"/>
</dbReference>
<dbReference type="RefSeq" id="WP_008572222.1">
    <property type="nucleotide sequence ID" value="NZ_CP017190.1"/>
</dbReference>
<dbReference type="SMR" id="Q3BZ34"/>
<dbReference type="STRING" id="456327.BJD11_21660"/>
<dbReference type="GeneID" id="61777121"/>
<dbReference type="KEGG" id="xcv:XCV0248"/>
<dbReference type="eggNOG" id="COG0661">
    <property type="taxonomic scope" value="Bacteria"/>
</dbReference>
<dbReference type="HOGENOM" id="CLU_006533_0_0_6"/>
<dbReference type="UniPathway" id="UPA00232"/>
<dbReference type="Proteomes" id="UP000007069">
    <property type="component" value="Chromosome"/>
</dbReference>
<dbReference type="GO" id="GO:0005886">
    <property type="term" value="C:plasma membrane"/>
    <property type="evidence" value="ECO:0007669"/>
    <property type="project" value="UniProtKB-SubCell"/>
</dbReference>
<dbReference type="GO" id="GO:0005524">
    <property type="term" value="F:ATP binding"/>
    <property type="evidence" value="ECO:0007669"/>
    <property type="project" value="UniProtKB-KW"/>
</dbReference>
<dbReference type="GO" id="GO:0004672">
    <property type="term" value="F:protein kinase activity"/>
    <property type="evidence" value="ECO:0007669"/>
    <property type="project" value="UniProtKB-UniRule"/>
</dbReference>
<dbReference type="GO" id="GO:0010795">
    <property type="term" value="P:regulation of ubiquinone biosynthetic process"/>
    <property type="evidence" value="ECO:0007669"/>
    <property type="project" value="UniProtKB-UniRule"/>
</dbReference>
<dbReference type="GO" id="GO:0006744">
    <property type="term" value="P:ubiquinone biosynthetic process"/>
    <property type="evidence" value="ECO:0007669"/>
    <property type="project" value="UniProtKB-UniPathway"/>
</dbReference>
<dbReference type="CDD" id="cd13972">
    <property type="entry name" value="UbiB"/>
    <property type="match status" value="1"/>
</dbReference>
<dbReference type="HAMAP" id="MF_00414">
    <property type="entry name" value="UbiB"/>
    <property type="match status" value="1"/>
</dbReference>
<dbReference type="InterPro" id="IPR004147">
    <property type="entry name" value="ABC1_dom"/>
</dbReference>
<dbReference type="InterPro" id="IPR011009">
    <property type="entry name" value="Kinase-like_dom_sf"/>
</dbReference>
<dbReference type="InterPro" id="IPR010232">
    <property type="entry name" value="UbiB"/>
</dbReference>
<dbReference type="InterPro" id="IPR045308">
    <property type="entry name" value="UbiB_bact"/>
</dbReference>
<dbReference type="InterPro" id="IPR050154">
    <property type="entry name" value="UbiB_kinase"/>
</dbReference>
<dbReference type="NCBIfam" id="NF003404">
    <property type="entry name" value="PRK04750.1"/>
    <property type="match status" value="1"/>
</dbReference>
<dbReference type="NCBIfam" id="TIGR01982">
    <property type="entry name" value="UbiB"/>
    <property type="match status" value="1"/>
</dbReference>
<dbReference type="PANTHER" id="PTHR10566">
    <property type="entry name" value="CHAPERONE-ACTIVITY OF BC1 COMPLEX CABC1 -RELATED"/>
    <property type="match status" value="1"/>
</dbReference>
<dbReference type="PANTHER" id="PTHR10566:SF113">
    <property type="entry name" value="PROTEIN ACTIVITY OF BC1 COMPLEX KINASE 7, CHLOROPLASTIC"/>
    <property type="match status" value="1"/>
</dbReference>
<dbReference type="Pfam" id="PF03109">
    <property type="entry name" value="ABC1"/>
    <property type="match status" value="1"/>
</dbReference>
<dbReference type="SUPFAM" id="SSF56112">
    <property type="entry name" value="Protein kinase-like (PK-like)"/>
    <property type="match status" value="1"/>
</dbReference>
<sequence>MKAILRASRIGRVILRYRLDALLEGTPAERWLRLAKPFVPRASAEIAAQSRGARLRLALQELGPIFVKFGQILSTRRDLIPADVAEELTLLQDRVKPFDGQAARLIVEAALGLPVSVAFASFDTVPLASASIAQVHAATLPPDANGVRREVVVKVLRPDIERQIDADIALLHSLATLVERTHPRADKIRPREVVAEIEGTLAAELDLQREGANASVLRRFWEGSDDLYVPEVIWSHTAERALTLERVYGIPSDDIAKLDAAGIDRKALAAKGVRVFYTQVFRDNFFHADAHAGNIWVDSDPERRLNPRFIALDFGIMGQLSQEDQYYLAENFMAIFHKDYRRMAELHVEAGWMPSNVRIDELEAAARSVCEPYFTRPLSEISLAQVLIKLFRVAQRYELTLQPQLILLQKTLLNIEGVGRQLDPKLDIWAVARPVLERILRERYSPRRVLRELGKRLPEIMTHAPDMPRLVHSWLKQQVEGRHQIDIRSPELLALDLSLRKLQTRVVTAITGSGLLVVAAVLYGLHPDGWYLGTVPVWSWISGGAGSAALLVAWLRR</sequence>
<proteinExistence type="inferred from homology"/>
<feature type="chain" id="PRO_1000050071" description="Probable protein kinase UbiB">
    <location>
        <begin position="1"/>
        <end position="557"/>
    </location>
</feature>
<feature type="transmembrane region" description="Helical" evidence="1">
    <location>
        <begin position="506"/>
        <end position="526"/>
    </location>
</feature>
<feature type="transmembrane region" description="Helical" evidence="1">
    <location>
        <begin position="535"/>
        <end position="555"/>
    </location>
</feature>
<feature type="domain" description="Protein kinase" evidence="1">
    <location>
        <begin position="121"/>
        <end position="509"/>
    </location>
</feature>
<feature type="active site" description="Proton acceptor" evidence="1">
    <location>
        <position position="289"/>
    </location>
</feature>
<feature type="binding site" evidence="1">
    <location>
        <begin position="127"/>
        <end position="135"/>
    </location>
    <ligand>
        <name>ATP</name>
        <dbReference type="ChEBI" id="CHEBI:30616"/>
    </ligand>
</feature>
<feature type="binding site" evidence="1">
    <location>
        <position position="154"/>
    </location>
    <ligand>
        <name>ATP</name>
        <dbReference type="ChEBI" id="CHEBI:30616"/>
    </ligand>
</feature>
<evidence type="ECO:0000255" key="1">
    <source>
        <dbReference type="HAMAP-Rule" id="MF_00414"/>
    </source>
</evidence>
<name>UBIB_XANE5</name>
<keyword id="KW-0067">ATP-binding</keyword>
<keyword id="KW-0997">Cell inner membrane</keyword>
<keyword id="KW-1003">Cell membrane</keyword>
<keyword id="KW-0418">Kinase</keyword>
<keyword id="KW-0472">Membrane</keyword>
<keyword id="KW-0547">Nucleotide-binding</keyword>
<keyword id="KW-0808">Transferase</keyword>
<keyword id="KW-0812">Transmembrane</keyword>
<keyword id="KW-1133">Transmembrane helix</keyword>
<keyword id="KW-0831">Ubiquinone biosynthesis</keyword>